<name>HIS6_FRAP2</name>
<reference key="1">
    <citation type="submission" date="2007-12" db="EMBL/GenBank/DDBJ databases">
        <title>Complete sequence of chromosome of Francisella philomiragia subsp. philomiragia ATCC 25017.</title>
        <authorList>
            <consortium name="US DOE Joint Genome Institute"/>
            <person name="Copeland A."/>
            <person name="Lucas S."/>
            <person name="Lapidus A."/>
            <person name="Barry K."/>
            <person name="Detter J.C."/>
            <person name="Glavina del Rio T."/>
            <person name="Hammon N."/>
            <person name="Israni S."/>
            <person name="Dalin E."/>
            <person name="Tice H."/>
            <person name="Pitluck S."/>
            <person name="Chain P."/>
            <person name="Malfatti S."/>
            <person name="Shin M."/>
            <person name="Vergez L."/>
            <person name="Schmutz J."/>
            <person name="Larimer F."/>
            <person name="Land M."/>
            <person name="Hauser L."/>
            <person name="Richardson P."/>
        </authorList>
    </citation>
    <scope>NUCLEOTIDE SEQUENCE [LARGE SCALE GENOMIC DNA]</scope>
    <source>
        <strain>ATCC 25017 / CCUG 19701 / FSC 153 / O#319-036</strain>
    </source>
</reference>
<keyword id="KW-0028">Amino-acid biosynthesis</keyword>
<keyword id="KW-0963">Cytoplasm</keyword>
<keyword id="KW-0368">Histidine biosynthesis</keyword>
<keyword id="KW-0456">Lyase</keyword>
<protein>
    <recommendedName>
        <fullName evidence="1">Imidazole glycerol phosphate synthase subunit HisF</fullName>
        <ecNumber evidence="1">4.3.2.10</ecNumber>
    </recommendedName>
    <alternativeName>
        <fullName evidence="1">IGP synthase cyclase subunit</fullName>
    </alternativeName>
    <alternativeName>
        <fullName evidence="1">IGP synthase subunit HisF</fullName>
    </alternativeName>
    <alternativeName>
        <fullName evidence="1">ImGP synthase subunit HisF</fullName>
        <shortName evidence="1">IGPS subunit HisF</shortName>
    </alternativeName>
</protein>
<evidence type="ECO:0000255" key="1">
    <source>
        <dbReference type="HAMAP-Rule" id="MF_01013"/>
    </source>
</evidence>
<accession>B0TY41</accession>
<gene>
    <name evidence="1" type="primary">hisF</name>
    <name type="ordered locus">Fphi_0063</name>
</gene>
<sequence>MLTKRIIPCLDVKDDVVVKGVKFRNHRIIGDIIELAQKYSDAGADELVFYDIGASPDNKLLSIKWIQEIAKKINIPFCVAGGIKSVENARAILNEGADKISVNSAALARPDLIDELVYEFGSQCVVVGIDSKFIDGEFKVCQYTGSADKTVQTLLDPVSWAKEVESRGAGEIVLNCMNQDGVKGGYDLEHLREVQSNVSIPVIASGGAGEIQHFIDVFKYTEIDGALAASVFHDDIIAIPELKQELFKNNIPTRIVK</sequence>
<organism>
    <name type="scientific">Francisella philomiragia subsp. philomiragia (strain ATCC 25017 / CCUG 19701 / FSC 153 / O#319-036)</name>
    <dbReference type="NCBI Taxonomy" id="484022"/>
    <lineage>
        <taxon>Bacteria</taxon>
        <taxon>Pseudomonadati</taxon>
        <taxon>Pseudomonadota</taxon>
        <taxon>Gammaproteobacteria</taxon>
        <taxon>Thiotrichales</taxon>
        <taxon>Francisellaceae</taxon>
        <taxon>Francisella</taxon>
    </lineage>
</organism>
<comment type="function">
    <text evidence="1">IGPS catalyzes the conversion of PRFAR and glutamine to IGP, AICAR and glutamate. The HisF subunit catalyzes the cyclization activity that produces IGP and AICAR from PRFAR using the ammonia provided by the HisH subunit.</text>
</comment>
<comment type="catalytic activity">
    <reaction evidence="1">
        <text>5-[(5-phospho-1-deoxy-D-ribulos-1-ylimino)methylamino]-1-(5-phospho-beta-D-ribosyl)imidazole-4-carboxamide + L-glutamine = D-erythro-1-(imidazol-4-yl)glycerol 3-phosphate + 5-amino-1-(5-phospho-beta-D-ribosyl)imidazole-4-carboxamide + L-glutamate + H(+)</text>
        <dbReference type="Rhea" id="RHEA:24793"/>
        <dbReference type="ChEBI" id="CHEBI:15378"/>
        <dbReference type="ChEBI" id="CHEBI:29985"/>
        <dbReference type="ChEBI" id="CHEBI:58278"/>
        <dbReference type="ChEBI" id="CHEBI:58359"/>
        <dbReference type="ChEBI" id="CHEBI:58475"/>
        <dbReference type="ChEBI" id="CHEBI:58525"/>
        <dbReference type="EC" id="4.3.2.10"/>
    </reaction>
</comment>
<comment type="pathway">
    <text evidence="1">Amino-acid biosynthesis; L-histidine biosynthesis; L-histidine from 5-phospho-alpha-D-ribose 1-diphosphate: step 5/9.</text>
</comment>
<comment type="subunit">
    <text evidence="1">Heterodimer of HisH and HisF.</text>
</comment>
<comment type="subcellular location">
    <subcellularLocation>
        <location evidence="1">Cytoplasm</location>
    </subcellularLocation>
</comment>
<comment type="similarity">
    <text evidence="1">Belongs to the HisA/HisF family.</text>
</comment>
<feature type="chain" id="PRO_1000084060" description="Imidazole glycerol phosphate synthase subunit HisF">
    <location>
        <begin position="1"/>
        <end position="257"/>
    </location>
</feature>
<feature type="active site" evidence="1">
    <location>
        <position position="11"/>
    </location>
</feature>
<feature type="active site" evidence="1">
    <location>
        <position position="130"/>
    </location>
</feature>
<proteinExistence type="inferred from homology"/>
<dbReference type="EC" id="4.3.2.10" evidence="1"/>
<dbReference type="EMBL" id="CP000937">
    <property type="protein sequence ID" value="ABZ86283.1"/>
    <property type="molecule type" value="Genomic_DNA"/>
</dbReference>
<dbReference type="SMR" id="B0TY41"/>
<dbReference type="KEGG" id="fph:Fphi_0063"/>
<dbReference type="eggNOG" id="COG0107">
    <property type="taxonomic scope" value="Bacteria"/>
</dbReference>
<dbReference type="HOGENOM" id="CLU_048577_4_0_6"/>
<dbReference type="UniPathway" id="UPA00031">
    <property type="reaction ID" value="UER00010"/>
</dbReference>
<dbReference type="GO" id="GO:0005737">
    <property type="term" value="C:cytoplasm"/>
    <property type="evidence" value="ECO:0007669"/>
    <property type="project" value="UniProtKB-SubCell"/>
</dbReference>
<dbReference type="GO" id="GO:0000107">
    <property type="term" value="F:imidazoleglycerol-phosphate synthase activity"/>
    <property type="evidence" value="ECO:0007669"/>
    <property type="project" value="UniProtKB-UniRule"/>
</dbReference>
<dbReference type="GO" id="GO:0016829">
    <property type="term" value="F:lyase activity"/>
    <property type="evidence" value="ECO:0007669"/>
    <property type="project" value="UniProtKB-KW"/>
</dbReference>
<dbReference type="GO" id="GO:0000105">
    <property type="term" value="P:L-histidine biosynthetic process"/>
    <property type="evidence" value="ECO:0007669"/>
    <property type="project" value="UniProtKB-UniRule"/>
</dbReference>
<dbReference type="CDD" id="cd04731">
    <property type="entry name" value="HisF"/>
    <property type="match status" value="1"/>
</dbReference>
<dbReference type="Gene3D" id="3.20.20.70">
    <property type="entry name" value="Aldolase class I"/>
    <property type="match status" value="1"/>
</dbReference>
<dbReference type="HAMAP" id="MF_01013">
    <property type="entry name" value="HisF"/>
    <property type="match status" value="1"/>
</dbReference>
<dbReference type="InterPro" id="IPR013785">
    <property type="entry name" value="Aldolase_TIM"/>
</dbReference>
<dbReference type="InterPro" id="IPR006062">
    <property type="entry name" value="His_biosynth"/>
</dbReference>
<dbReference type="InterPro" id="IPR004651">
    <property type="entry name" value="HisF"/>
</dbReference>
<dbReference type="InterPro" id="IPR050064">
    <property type="entry name" value="IGPS_HisA/HisF"/>
</dbReference>
<dbReference type="InterPro" id="IPR011060">
    <property type="entry name" value="RibuloseP-bd_barrel"/>
</dbReference>
<dbReference type="NCBIfam" id="TIGR00735">
    <property type="entry name" value="hisF"/>
    <property type="match status" value="1"/>
</dbReference>
<dbReference type="PANTHER" id="PTHR21235:SF2">
    <property type="entry name" value="IMIDAZOLE GLYCEROL PHOSPHATE SYNTHASE HISHF"/>
    <property type="match status" value="1"/>
</dbReference>
<dbReference type="PANTHER" id="PTHR21235">
    <property type="entry name" value="IMIDAZOLE GLYCEROL PHOSPHATE SYNTHASE SUBUNIT HISF/H IGP SYNTHASE SUBUNIT HISF/H"/>
    <property type="match status" value="1"/>
</dbReference>
<dbReference type="Pfam" id="PF00977">
    <property type="entry name" value="His_biosynth"/>
    <property type="match status" value="1"/>
</dbReference>
<dbReference type="SUPFAM" id="SSF51366">
    <property type="entry name" value="Ribulose-phoshate binding barrel"/>
    <property type="match status" value="1"/>
</dbReference>